<reference key="1">
    <citation type="journal article" date="2002" name="Proc. Natl. Acad. Sci. U.S.A.">
        <title>The complete genome sequence of Chlorobium tepidum TLS, a photosynthetic, anaerobic, green-sulfur bacterium.</title>
        <authorList>
            <person name="Eisen J.A."/>
            <person name="Nelson K.E."/>
            <person name="Paulsen I.T."/>
            <person name="Heidelberg J.F."/>
            <person name="Wu M."/>
            <person name="Dodson R.J."/>
            <person name="DeBoy R.T."/>
            <person name="Gwinn M.L."/>
            <person name="Nelson W.C."/>
            <person name="Haft D.H."/>
            <person name="Hickey E.K."/>
            <person name="Peterson J.D."/>
            <person name="Durkin A.S."/>
            <person name="Kolonay J.F."/>
            <person name="Yang F."/>
            <person name="Holt I.E."/>
            <person name="Umayam L.A."/>
            <person name="Mason T.M."/>
            <person name="Brenner M."/>
            <person name="Shea T.P."/>
            <person name="Parksey D.S."/>
            <person name="Nierman W.C."/>
            <person name="Feldblyum T.V."/>
            <person name="Hansen C.L."/>
            <person name="Craven M.B."/>
            <person name="Radune D."/>
            <person name="Vamathevan J.J."/>
            <person name="Khouri H.M."/>
            <person name="White O."/>
            <person name="Gruber T.M."/>
            <person name="Ketchum K.A."/>
            <person name="Venter J.C."/>
            <person name="Tettelin H."/>
            <person name="Bryant D.A."/>
            <person name="Fraser C.M."/>
        </authorList>
    </citation>
    <scope>NUCLEOTIDE SEQUENCE [LARGE SCALE GENOMIC DNA]</scope>
    <source>
        <strain>ATCC 49652 / DSM 12025 / NBRC 103806 / TLS</strain>
    </source>
</reference>
<keyword id="KW-0066">ATP synthesis</keyword>
<keyword id="KW-0067">ATP-binding</keyword>
<keyword id="KW-0997">Cell inner membrane</keyword>
<keyword id="KW-1003">Cell membrane</keyword>
<keyword id="KW-0139">CF(1)</keyword>
<keyword id="KW-0375">Hydrogen ion transport</keyword>
<keyword id="KW-0406">Ion transport</keyword>
<keyword id="KW-0472">Membrane</keyword>
<keyword id="KW-0547">Nucleotide-binding</keyword>
<keyword id="KW-1185">Reference proteome</keyword>
<keyword id="KW-1278">Translocase</keyword>
<keyword id="KW-0813">Transport</keyword>
<dbReference type="EC" id="7.1.2.2" evidence="2"/>
<dbReference type="EMBL" id="AE006470">
    <property type="protein sequence ID" value="AAM73250.1"/>
    <property type="molecule type" value="Genomic_DNA"/>
</dbReference>
<dbReference type="RefSeq" id="NP_662908.1">
    <property type="nucleotide sequence ID" value="NC_002932.3"/>
</dbReference>
<dbReference type="RefSeq" id="WP_010933688.1">
    <property type="nucleotide sequence ID" value="NC_002932.3"/>
</dbReference>
<dbReference type="SMR" id="Q8KAW8"/>
<dbReference type="STRING" id="194439.CT2033"/>
<dbReference type="EnsemblBacteria" id="AAM73250">
    <property type="protein sequence ID" value="AAM73250"/>
    <property type="gene ID" value="CT2033"/>
</dbReference>
<dbReference type="KEGG" id="cte:CT2033"/>
<dbReference type="PATRIC" id="fig|194439.7.peg.1841"/>
<dbReference type="eggNOG" id="COG0056">
    <property type="taxonomic scope" value="Bacteria"/>
</dbReference>
<dbReference type="HOGENOM" id="CLU_010091_2_1_10"/>
<dbReference type="OrthoDB" id="9803053at2"/>
<dbReference type="Proteomes" id="UP000001007">
    <property type="component" value="Chromosome"/>
</dbReference>
<dbReference type="GO" id="GO:0005886">
    <property type="term" value="C:plasma membrane"/>
    <property type="evidence" value="ECO:0007669"/>
    <property type="project" value="UniProtKB-SubCell"/>
</dbReference>
<dbReference type="GO" id="GO:0045259">
    <property type="term" value="C:proton-transporting ATP synthase complex"/>
    <property type="evidence" value="ECO:0007669"/>
    <property type="project" value="UniProtKB-KW"/>
</dbReference>
<dbReference type="GO" id="GO:0043531">
    <property type="term" value="F:ADP binding"/>
    <property type="evidence" value="ECO:0007669"/>
    <property type="project" value="TreeGrafter"/>
</dbReference>
<dbReference type="GO" id="GO:0005524">
    <property type="term" value="F:ATP binding"/>
    <property type="evidence" value="ECO:0007669"/>
    <property type="project" value="UniProtKB-UniRule"/>
</dbReference>
<dbReference type="GO" id="GO:0046933">
    <property type="term" value="F:proton-transporting ATP synthase activity, rotational mechanism"/>
    <property type="evidence" value="ECO:0007669"/>
    <property type="project" value="UniProtKB-UniRule"/>
</dbReference>
<dbReference type="CDD" id="cd18113">
    <property type="entry name" value="ATP-synt_F1_alpha_C"/>
    <property type="match status" value="1"/>
</dbReference>
<dbReference type="CDD" id="cd18116">
    <property type="entry name" value="ATP-synt_F1_alpha_N"/>
    <property type="match status" value="1"/>
</dbReference>
<dbReference type="CDD" id="cd01132">
    <property type="entry name" value="F1-ATPase_alpha_CD"/>
    <property type="match status" value="1"/>
</dbReference>
<dbReference type="FunFam" id="1.20.150.20:FF:000001">
    <property type="entry name" value="ATP synthase subunit alpha"/>
    <property type="match status" value="1"/>
</dbReference>
<dbReference type="FunFam" id="2.40.30.20:FF:000001">
    <property type="entry name" value="ATP synthase subunit alpha"/>
    <property type="match status" value="1"/>
</dbReference>
<dbReference type="FunFam" id="3.40.50.300:FF:000002">
    <property type="entry name" value="ATP synthase subunit alpha"/>
    <property type="match status" value="1"/>
</dbReference>
<dbReference type="Gene3D" id="2.40.30.20">
    <property type="match status" value="1"/>
</dbReference>
<dbReference type="Gene3D" id="1.20.150.20">
    <property type="entry name" value="ATP synthase alpha/beta chain, C-terminal domain"/>
    <property type="match status" value="1"/>
</dbReference>
<dbReference type="Gene3D" id="3.40.50.300">
    <property type="entry name" value="P-loop containing nucleotide triphosphate hydrolases"/>
    <property type="match status" value="1"/>
</dbReference>
<dbReference type="HAMAP" id="MF_01346">
    <property type="entry name" value="ATP_synth_alpha_bact"/>
    <property type="match status" value="1"/>
</dbReference>
<dbReference type="InterPro" id="IPR023366">
    <property type="entry name" value="ATP_synth_asu-like_sf"/>
</dbReference>
<dbReference type="InterPro" id="IPR000793">
    <property type="entry name" value="ATP_synth_asu_C"/>
</dbReference>
<dbReference type="InterPro" id="IPR038376">
    <property type="entry name" value="ATP_synth_asu_C_sf"/>
</dbReference>
<dbReference type="InterPro" id="IPR033732">
    <property type="entry name" value="ATP_synth_F1_a_nt-bd_dom"/>
</dbReference>
<dbReference type="InterPro" id="IPR005294">
    <property type="entry name" value="ATP_synth_F1_asu"/>
</dbReference>
<dbReference type="InterPro" id="IPR020003">
    <property type="entry name" value="ATPase_a/bsu_AS"/>
</dbReference>
<dbReference type="InterPro" id="IPR004100">
    <property type="entry name" value="ATPase_F1/V1/A1_a/bsu_N"/>
</dbReference>
<dbReference type="InterPro" id="IPR036121">
    <property type="entry name" value="ATPase_F1/V1/A1_a/bsu_N_sf"/>
</dbReference>
<dbReference type="InterPro" id="IPR000194">
    <property type="entry name" value="ATPase_F1/V1/A1_a/bsu_nucl-bd"/>
</dbReference>
<dbReference type="InterPro" id="IPR027417">
    <property type="entry name" value="P-loop_NTPase"/>
</dbReference>
<dbReference type="NCBIfam" id="TIGR00962">
    <property type="entry name" value="atpA"/>
    <property type="match status" value="1"/>
</dbReference>
<dbReference type="NCBIfam" id="NF009884">
    <property type="entry name" value="PRK13343.1"/>
    <property type="match status" value="1"/>
</dbReference>
<dbReference type="PANTHER" id="PTHR48082">
    <property type="entry name" value="ATP SYNTHASE SUBUNIT ALPHA, MITOCHONDRIAL"/>
    <property type="match status" value="1"/>
</dbReference>
<dbReference type="PANTHER" id="PTHR48082:SF2">
    <property type="entry name" value="ATP SYNTHASE SUBUNIT ALPHA, MITOCHONDRIAL"/>
    <property type="match status" value="1"/>
</dbReference>
<dbReference type="Pfam" id="PF00006">
    <property type="entry name" value="ATP-synt_ab"/>
    <property type="match status" value="1"/>
</dbReference>
<dbReference type="Pfam" id="PF00306">
    <property type="entry name" value="ATP-synt_ab_C"/>
    <property type="match status" value="1"/>
</dbReference>
<dbReference type="Pfam" id="PF02874">
    <property type="entry name" value="ATP-synt_ab_N"/>
    <property type="match status" value="1"/>
</dbReference>
<dbReference type="PIRSF" id="PIRSF039088">
    <property type="entry name" value="F_ATPase_subunit_alpha"/>
    <property type="match status" value="1"/>
</dbReference>
<dbReference type="SUPFAM" id="SSF47917">
    <property type="entry name" value="C-terminal domain of alpha and beta subunits of F1 ATP synthase"/>
    <property type="match status" value="1"/>
</dbReference>
<dbReference type="SUPFAM" id="SSF50615">
    <property type="entry name" value="N-terminal domain of alpha and beta subunits of F1 ATP synthase"/>
    <property type="match status" value="1"/>
</dbReference>
<dbReference type="SUPFAM" id="SSF52540">
    <property type="entry name" value="P-loop containing nucleoside triphosphate hydrolases"/>
    <property type="match status" value="1"/>
</dbReference>
<dbReference type="PROSITE" id="PS00152">
    <property type="entry name" value="ATPASE_ALPHA_BETA"/>
    <property type="match status" value="1"/>
</dbReference>
<gene>
    <name evidence="2" type="primary">atpA</name>
    <name type="ordered locus">CT2033</name>
</gene>
<proteinExistence type="inferred from homology"/>
<protein>
    <recommendedName>
        <fullName evidence="2">ATP synthase subunit alpha</fullName>
        <ecNumber evidence="2">7.1.2.2</ecNumber>
    </recommendedName>
    <alternativeName>
        <fullName evidence="2">ATP synthase F1 sector subunit alpha</fullName>
    </alternativeName>
    <alternativeName>
        <fullName evidence="2">F-ATPase subunit alpha</fullName>
    </alternativeName>
</protein>
<comment type="function">
    <text evidence="2">Produces ATP from ADP in the presence of a proton gradient across the membrane. The alpha chain is a regulatory subunit.</text>
</comment>
<comment type="catalytic activity">
    <reaction evidence="2">
        <text>ATP + H2O + 4 H(+)(in) = ADP + phosphate + 5 H(+)(out)</text>
        <dbReference type="Rhea" id="RHEA:57720"/>
        <dbReference type="ChEBI" id="CHEBI:15377"/>
        <dbReference type="ChEBI" id="CHEBI:15378"/>
        <dbReference type="ChEBI" id="CHEBI:30616"/>
        <dbReference type="ChEBI" id="CHEBI:43474"/>
        <dbReference type="ChEBI" id="CHEBI:456216"/>
        <dbReference type="EC" id="7.1.2.2"/>
    </reaction>
</comment>
<comment type="subunit">
    <text evidence="1">F-type ATPases have 2 components, CF(1) - the catalytic core - and CF(0) - the membrane proton channel. CF(1) has five subunits: alpha(3), beta(3), gamma(1), delta(1), epsilon(1). CF(0) has four main subunits: a(1), b(1), b'(1) and c(9-12) (By similarity).</text>
</comment>
<comment type="subcellular location">
    <subcellularLocation>
        <location evidence="2">Cell inner membrane</location>
        <topology evidence="2">Peripheral membrane protein</topology>
    </subcellularLocation>
</comment>
<comment type="similarity">
    <text evidence="2">Belongs to the ATPase alpha/beta chains family.</text>
</comment>
<name>ATPA_CHLTE</name>
<feature type="chain" id="PRO_0000238231" description="ATP synthase subunit alpha">
    <location>
        <begin position="1"/>
        <end position="526"/>
    </location>
</feature>
<feature type="binding site" evidence="2">
    <location>
        <begin position="171"/>
        <end position="178"/>
    </location>
    <ligand>
        <name>ATP</name>
        <dbReference type="ChEBI" id="CHEBI:30616"/>
    </ligand>
</feature>
<feature type="site" description="Required for activity" evidence="2">
    <location>
        <position position="382"/>
    </location>
</feature>
<accession>Q8KAW8</accession>
<sequence>MSTAVRPDEVSSILRKQLAGFESEADVYDVGTVLQVGDGIARIYGLSKVAAGELLEFPHNVMGMALNLEEDNVGAVLFGESNAVKEGDTVKRTNILASIPVGEAMLGRVINPLGEPIDGKGPINTDIRLPLERRAPGVIFRKSVHEPLQTGLKAIDAMIPIGRGQRELIIGDRQTGKTAVALDTIINQKGKGVQCIYVAIGLKGSTVAQVVNTLEKYGAMEYTTVVSATASDPAPLQFIAPFAGATIGEFFRDTGRHALVVYDDLSKQAVAYRQLSLLLRRPPGREAYPGDVFYLHSRLLERAAKITDDIEVAKKMNDLPEPLKPLVKGGGSLTALPVIETQAGDVSAYIPTNVISITDGQIFLESNLFNAGQRPAINVGISVSRVGGAAQIKAMKKVAGTLRLDLAQFRELEAFSKFGSDLDKSTKAQLDRGARLVEILKQGQYIPMPVEKQVAIIFIGTQGLLDSVDLKQVRRFEEEFLAMLEQKHPEILSSIAEKGTLESDIASKLKELGEKYVASFKEKSKA</sequence>
<evidence type="ECO:0000250" key="1"/>
<evidence type="ECO:0000255" key="2">
    <source>
        <dbReference type="HAMAP-Rule" id="MF_01346"/>
    </source>
</evidence>
<organism>
    <name type="scientific">Chlorobaculum tepidum (strain ATCC 49652 / DSM 12025 / NBRC 103806 / TLS)</name>
    <name type="common">Chlorobium tepidum</name>
    <dbReference type="NCBI Taxonomy" id="194439"/>
    <lineage>
        <taxon>Bacteria</taxon>
        <taxon>Pseudomonadati</taxon>
        <taxon>Chlorobiota</taxon>
        <taxon>Chlorobiia</taxon>
        <taxon>Chlorobiales</taxon>
        <taxon>Chlorobiaceae</taxon>
        <taxon>Chlorobaculum</taxon>
    </lineage>
</organism>